<proteinExistence type="inferred from homology"/>
<comment type="function">
    <text evidence="1">The UvrABC repair system catalyzes the recognition and processing of DNA lesions. UvrC both incises the 5' and 3' sides of the lesion. The N-terminal half is responsible for the 3' incision and the C-terminal half is responsible for the 5' incision.</text>
</comment>
<comment type="subunit">
    <text evidence="1">Interacts with UvrB in an incision complex.</text>
</comment>
<comment type="subcellular location">
    <subcellularLocation>
        <location evidence="1">Cytoplasm</location>
    </subcellularLocation>
</comment>
<comment type="similarity">
    <text evidence="1">Belongs to the UvrC family.</text>
</comment>
<keyword id="KW-0963">Cytoplasm</keyword>
<keyword id="KW-0227">DNA damage</keyword>
<keyword id="KW-0228">DNA excision</keyword>
<keyword id="KW-0234">DNA repair</keyword>
<keyword id="KW-0267">Excision nuclease</keyword>
<keyword id="KW-0742">SOS response</keyword>
<name>UVRC_SALG2</name>
<feature type="chain" id="PRO_1000099514" description="UvrABC system protein C">
    <location>
        <begin position="1"/>
        <end position="610"/>
    </location>
</feature>
<feature type="domain" description="GIY-YIG" evidence="1">
    <location>
        <begin position="16"/>
        <end position="94"/>
    </location>
</feature>
<feature type="domain" description="UVR" evidence="1">
    <location>
        <begin position="204"/>
        <end position="239"/>
    </location>
</feature>
<accession>B5R896</accession>
<organism>
    <name type="scientific">Salmonella gallinarum (strain 287/91 / NCTC 13346)</name>
    <dbReference type="NCBI Taxonomy" id="550538"/>
    <lineage>
        <taxon>Bacteria</taxon>
        <taxon>Pseudomonadati</taxon>
        <taxon>Pseudomonadota</taxon>
        <taxon>Gammaproteobacteria</taxon>
        <taxon>Enterobacterales</taxon>
        <taxon>Enterobacteriaceae</taxon>
        <taxon>Salmonella</taxon>
    </lineage>
</organism>
<protein>
    <recommendedName>
        <fullName evidence="1">UvrABC system protein C</fullName>
        <shortName evidence="1">Protein UvrC</shortName>
    </recommendedName>
    <alternativeName>
        <fullName evidence="1">Excinuclease ABC subunit C</fullName>
    </alternativeName>
</protein>
<evidence type="ECO:0000255" key="1">
    <source>
        <dbReference type="HAMAP-Rule" id="MF_00203"/>
    </source>
</evidence>
<gene>
    <name evidence="1" type="primary">uvrC</name>
    <name type="ordered locus">SG1107</name>
</gene>
<sequence length="610" mass="67991">MSEIFDAKAFLKTVTSQPGVYRMYDAGGTVIYVGKAKDLKKRLSSYFRSNLASRKTEALVAQIQHIDVTVTHTETEALLLEHNYIKLYQPRYNVLLRDDKSYPFIFLSGDTHPRLAMHRGAKHAKGEYFGPFPNGYAVRETLALLQKIFPIRQCENSVYRNRSRPCLQYQIGRCLGPCVAGLVSEEEYAQQVEYVRLFLSGKDDQVLTQLIARMEKASQDLAFEEAARIRDQIQAVRRVTEKQFVSNAGDDLDVIGVAFDAGMACVHVLFIRQGKVLGSRSYFPKVPGGTELGEVVETFVGQFYLQGSQMRTLPGEILLDFNLSDKTLLADSLSELAGRSIHVQTKPRGDRARYLKLARTNAATALITKLSQQSTITQRLTALAAVLKLPAIKRMECFDISHTMGEQTVASCVVFDANGPLRAEYRRYNIAGITPGDDYAAMNQVLRRRYGKAIEESKIPDVILIDGGKGQLAQAKAVFAELDVPWDKHRPLLLGVAKGADRKAGLEILFFEPEGEGFSLPPDSPALHVIQHIRDESHDHAIGGHRKKRAKVKNTSTLETIEGVGPKRRQMLLKYMGGLQGLRNASVEEIAKVPGISQGLAEKIFWSLKH</sequence>
<dbReference type="EMBL" id="AM933173">
    <property type="protein sequence ID" value="CAR36992.1"/>
    <property type="molecule type" value="Genomic_DNA"/>
</dbReference>
<dbReference type="RefSeq" id="WP_001289466.1">
    <property type="nucleotide sequence ID" value="NC_011274.1"/>
</dbReference>
<dbReference type="SMR" id="B5R896"/>
<dbReference type="KEGG" id="seg:SG1107"/>
<dbReference type="HOGENOM" id="CLU_014841_3_0_6"/>
<dbReference type="Proteomes" id="UP000008321">
    <property type="component" value="Chromosome"/>
</dbReference>
<dbReference type="GO" id="GO:0005737">
    <property type="term" value="C:cytoplasm"/>
    <property type="evidence" value="ECO:0007669"/>
    <property type="project" value="UniProtKB-SubCell"/>
</dbReference>
<dbReference type="GO" id="GO:0009380">
    <property type="term" value="C:excinuclease repair complex"/>
    <property type="evidence" value="ECO:0007669"/>
    <property type="project" value="InterPro"/>
</dbReference>
<dbReference type="GO" id="GO:0003677">
    <property type="term" value="F:DNA binding"/>
    <property type="evidence" value="ECO:0007669"/>
    <property type="project" value="UniProtKB-UniRule"/>
</dbReference>
<dbReference type="GO" id="GO:0009381">
    <property type="term" value="F:excinuclease ABC activity"/>
    <property type="evidence" value="ECO:0007669"/>
    <property type="project" value="UniProtKB-UniRule"/>
</dbReference>
<dbReference type="GO" id="GO:0006289">
    <property type="term" value="P:nucleotide-excision repair"/>
    <property type="evidence" value="ECO:0007669"/>
    <property type="project" value="UniProtKB-UniRule"/>
</dbReference>
<dbReference type="GO" id="GO:0009432">
    <property type="term" value="P:SOS response"/>
    <property type="evidence" value="ECO:0007669"/>
    <property type="project" value="UniProtKB-UniRule"/>
</dbReference>
<dbReference type="CDD" id="cd10434">
    <property type="entry name" value="GIY-YIG_UvrC_Cho"/>
    <property type="match status" value="1"/>
</dbReference>
<dbReference type="FunFam" id="1.10.150.20:FF:000005">
    <property type="entry name" value="UvrABC system protein C"/>
    <property type="match status" value="1"/>
</dbReference>
<dbReference type="FunFam" id="3.30.420.340:FF:000001">
    <property type="entry name" value="UvrABC system protein C"/>
    <property type="match status" value="1"/>
</dbReference>
<dbReference type="FunFam" id="3.40.1440.10:FF:000001">
    <property type="entry name" value="UvrABC system protein C"/>
    <property type="match status" value="1"/>
</dbReference>
<dbReference type="FunFam" id="4.10.860.10:FF:000002">
    <property type="entry name" value="UvrABC system protein C"/>
    <property type="match status" value="1"/>
</dbReference>
<dbReference type="Gene3D" id="1.10.150.20">
    <property type="entry name" value="5' to 3' exonuclease, C-terminal subdomain"/>
    <property type="match status" value="1"/>
</dbReference>
<dbReference type="Gene3D" id="3.40.1440.10">
    <property type="entry name" value="GIY-YIG endonuclease"/>
    <property type="match status" value="1"/>
</dbReference>
<dbReference type="Gene3D" id="4.10.860.10">
    <property type="entry name" value="UVR domain"/>
    <property type="match status" value="1"/>
</dbReference>
<dbReference type="Gene3D" id="3.30.420.340">
    <property type="entry name" value="UvrC, RNAse H endonuclease domain"/>
    <property type="match status" value="1"/>
</dbReference>
<dbReference type="HAMAP" id="MF_00203">
    <property type="entry name" value="UvrC"/>
    <property type="match status" value="1"/>
</dbReference>
<dbReference type="InterPro" id="IPR000305">
    <property type="entry name" value="GIY-YIG_endonuc"/>
</dbReference>
<dbReference type="InterPro" id="IPR035901">
    <property type="entry name" value="GIY-YIG_endonuc_sf"/>
</dbReference>
<dbReference type="InterPro" id="IPR047296">
    <property type="entry name" value="GIY-YIG_UvrC_Cho"/>
</dbReference>
<dbReference type="InterPro" id="IPR003583">
    <property type="entry name" value="Hlx-hairpin-Hlx_DNA-bd_motif"/>
</dbReference>
<dbReference type="InterPro" id="IPR010994">
    <property type="entry name" value="RuvA_2-like"/>
</dbReference>
<dbReference type="InterPro" id="IPR001943">
    <property type="entry name" value="UVR_dom"/>
</dbReference>
<dbReference type="InterPro" id="IPR036876">
    <property type="entry name" value="UVR_dom_sf"/>
</dbReference>
<dbReference type="InterPro" id="IPR050066">
    <property type="entry name" value="UvrABC_protein_C"/>
</dbReference>
<dbReference type="InterPro" id="IPR004791">
    <property type="entry name" value="UvrC"/>
</dbReference>
<dbReference type="InterPro" id="IPR001162">
    <property type="entry name" value="UvrC_RNase_H_dom"/>
</dbReference>
<dbReference type="InterPro" id="IPR038476">
    <property type="entry name" value="UvrC_RNase_H_dom_sf"/>
</dbReference>
<dbReference type="NCBIfam" id="NF001824">
    <property type="entry name" value="PRK00558.1-5"/>
    <property type="match status" value="1"/>
</dbReference>
<dbReference type="NCBIfam" id="TIGR00194">
    <property type="entry name" value="uvrC"/>
    <property type="match status" value="1"/>
</dbReference>
<dbReference type="PANTHER" id="PTHR30562:SF1">
    <property type="entry name" value="UVRABC SYSTEM PROTEIN C"/>
    <property type="match status" value="1"/>
</dbReference>
<dbReference type="PANTHER" id="PTHR30562">
    <property type="entry name" value="UVRC/OXIDOREDUCTASE"/>
    <property type="match status" value="1"/>
</dbReference>
<dbReference type="Pfam" id="PF01541">
    <property type="entry name" value="GIY-YIG"/>
    <property type="match status" value="1"/>
</dbReference>
<dbReference type="Pfam" id="PF14520">
    <property type="entry name" value="HHH_5"/>
    <property type="match status" value="1"/>
</dbReference>
<dbReference type="Pfam" id="PF02151">
    <property type="entry name" value="UVR"/>
    <property type="match status" value="1"/>
</dbReference>
<dbReference type="Pfam" id="PF22920">
    <property type="entry name" value="UvrC_RNaseH"/>
    <property type="match status" value="1"/>
</dbReference>
<dbReference type="Pfam" id="PF08459">
    <property type="entry name" value="UvrC_RNaseH_dom"/>
    <property type="match status" value="1"/>
</dbReference>
<dbReference type="SMART" id="SM00465">
    <property type="entry name" value="GIYc"/>
    <property type="match status" value="1"/>
</dbReference>
<dbReference type="SMART" id="SM00278">
    <property type="entry name" value="HhH1"/>
    <property type="match status" value="2"/>
</dbReference>
<dbReference type="SUPFAM" id="SSF46600">
    <property type="entry name" value="C-terminal UvrC-binding domain of UvrB"/>
    <property type="match status" value="1"/>
</dbReference>
<dbReference type="SUPFAM" id="SSF82771">
    <property type="entry name" value="GIY-YIG endonuclease"/>
    <property type="match status" value="1"/>
</dbReference>
<dbReference type="SUPFAM" id="SSF47781">
    <property type="entry name" value="RuvA domain 2-like"/>
    <property type="match status" value="1"/>
</dbReference>
<dbReference type="PROSITE" id="PS50164">
    <property type="entry name" value="GIY_YIG"/>
    <property type="match status" value="1"/>
</dbReference>
<dbReference type="PROSITE" id="PS50151">
    <property type="entry name" value="UVR"/>
    <property type="match status" value="1"/>
</dbReference>
<dbReference type="PROSITE" id="PS50165">
    <property type="entry name" value="UVRC"/>
    <property type="match status" value="1"/>
</dbReference>
<reference key="1">
    <citation type="journal article" date="2008" name="Genome Res.">
        <title>Comparative genome analysis of Salmonella enteritidis PT4 and Salmonella gallinarum 287/91 provides insights into evolutionary and host adaptation pathways.</title>
        <authorList>
            <person name="Thomson N.R."/>
            <person name="Clayton D.J."/>
            <person name="Windhorst D."/>
            <person name="Vernikos G."/>
            <person name="Davidson S."/>
            <person name="Churcher C."/>
            <person name="Quail M.A."/>
            <person name="Stevens M."/>
            <person name="Jones M.A."/>
            <person name="Watson M."/>
            <person name="Barron A."/>
            <person name="Layton A."/>
            <person name="Pickard D."/>
            <person name="Kingsley R.A."/>
            <person name="Bignell A."/>
            <person name="Clark L."/>
            <person name="Harris B."/>
            <person name="Ormond D."/>
            <person name="Abdellah Z."/>
            <person name="Brooks K."/>
            <person name="Cherevach I."/>
            <person name="Chillingworth T."/>
            <person name="Woodward J."/>
            <person name="Norberczak H."/>
            <person name="Lord A."/>
            <person name="Arrowsmith C."/>
            <person name="Jagels K."/>
            <person name="Moule S."/>
            <person name="Mungall K."/>
            <person name="Saunders M."/>
            <person name="Whitehead S."/>
            <person name="Chabalgoity J.A."/>
            <person name="Maskell D."/>
            <person name="Humphreys T."/>
            <person name="Roberts M."/>
            <person name="Barrow P.A."/>
            <person name="Dougan G."/>
            <person name="Parkhill J."/>
        </authorList>
    </citation>
    <scope>NUCLEOTIDE SEQUENCE [LARGE SCALE GENOMIC DNA]</scope>
    <source>
        <strain>287/91 / NCTC 13346</strain>
    </source>
</reference>